<organism>
    <name type="scientific">Natronomonas pharaonis (strain ATCC 35678 / DSM 2160 / CIP 103997 / JCM 8858 / NBRC 14720 / NCIMB 2260 / Gabara)</name>
    <name type="common">Halobacterium pharaonis</name>
    <dbReference type="NCBI Taxonomy" id="348780"/>
    <lineage>
        <taxon>Archaea</taxon>
        <taxon>Methanobacteriati</taxon>
        <taxon>Methanobacteriota</taxon>
        <taxon>Stenosarchaea group</taxon>
        <taxon>Halobacteria</taxon>
        <taxon>Halobacteriales</taxon>
        <taxon>Haloarculaceae</taxon>
        <taxon>Natronomonas</taxon>
    </lineage>
</organism>
<protein>
    <recommendedName>
        <fullName evidence="1">N-(5'-phosphoribosyl)anthranilate isomerase</fullName>
        <shortName evidence="1">PRAI</shortName>
        <ecNumber evidence="1">5.3.1.24</ecNumber>
    </recommendedName>
</protein>
<dbReference type="EC" id="5.3.1.24" evidence="1"/>
<dbReference type="EMBL" id="CR936257">
    <property type="protein sequence ID" value="CAI49761.1"/>
    <property type="molecule type" value="Genomic_DNA"/>
</dbReference>
<dbReference type="RefSeq" id="WP_011323381.1">
    <property type="nucleotide sequence ID" value="NC_007426.1"/>
</dbReference>
<dbReference type="SMR" id="Q3IQ37"/>
<dbReference type="STRING" id="348780.NP_3340A"/>
<dbReference type="EnsemblBacteria" id="CAI49761">
    <property type="protein sequence ID" value="CAI49761"/>
    <property type="gene ID" value="NP_3340A"/>
</dbReference>
<dbReference type="GeneID" id="3703416"/>
<dbReference type="KEGG" id="nph:NP_3340A"/>
<dbReference type="eggNOG" id="arCOG01983">
    <property type="taxonomic scope" value="Archaea"/>
</dbReference>
<dbReference type="HOGENOM" id="CLU_076364_2_1_2"/>
<dbReference type="OrthoDB" id="27513at2157"/>
<dbReference type="UniPathway" id="UPA00035">
    <property type="reaction ID" value="UER00042"/>
</dbReference>
<dbReference type="Proteomes" id="UP000002698">
    <property type="component" value="Chromosome"/>
</dbReference>
<dbReference type="GO" id="GO:0004640">
    <property type="term" value="F:phosphoribosylanthranilate isomerase activity"/>
    <property type="evidence" value="ECO:0007669"/>
    <property type="project" value="UniProtKB-UniRule"/>
</dbReference>
<dbReference type="GO" id="GO:0000162">
    <property type="term" value="P:L-tryptophan biosynthetic process"/>
    <property type="evidence" value="ECO:0007669"/>
    <property type="project" value="UniProtKB-UniRule"/>
</dbReference>
<dbReference type="CDD" id="cd00405">
    <property type="entry name" value="PRAI"/>
    <property type="match status" value="1"/>
</dbReference>
<dbReference type="Gene3D" id="3.20.20.70">
    <property type="entry name" value="Aldolase class I"/>
    <property type="match status" value="1"/>
</dbReference>
<dbReference type="HAMAP" id="MF_00135">
    <property type="entry name" value="PRAI"/>
    <property type="match status" value="1"/>
</dbReference>
<dbReference type="InterPro" id="IPR013785">
    <property type="entry name" value="Aldolase_TIM"/>
</dbReference>
<dbReference type="InterPro" id="IPR001240">
    <property type="entry name" value="PRAI_dom"/>
</dbReference>
<dbReference type="InterPro" id="IPR011060">
    <property type="entry name" value="RibuloseP-bd_barrel"/>
</dbReference>
<dbReference type="InterPro" id="IPR044643">
    <property type="entry name" value="TrpF_fam"/>
</dbReference>
<dbReference type="PANTHER" id="PTHR42894">
    <property type="entry name" value="N-(5'-PHOSPHORIBOSYL)ANTHRANILATE ISOMERASE"/>
    <property type="match status" value="1"/>
</dbReference>
<dbReference type="PANTHER" id="PTHR42894:SF1">
    <property type="entry name" value="N-(5'-PHOSPHORIBOSYL)ANTHRANILATE ISOMERASE"/>
    <property type="match status" value="1"/>
</dbReference>
<dbReference type="Pfam" id="PF00697">
    <property type="entry name" value="PRAI"/>
    <property type="match status" value="1"/>
</dbReference>
<dbReference type="SUPFAM" id="SSF51366">
    <property type="entry name" value="Ribulose-phoshate binding barrel"/>
    <property type="match status" value="1"/>
</dbReference>
<sequence length="208" mass="20745">MTRVKVCGITNRSDLDTAVDAGVDAVGLIVDVDVQTPREISPQQAAELAAATPPFVTAVLVTMADVPDAATELVEAVRPDAVQVHGESTPDALASLGAAVEADVIKATDPGTAATYDGHADAVLVDSLDESGAGGTGTVHDWDRTGELVESLQSPVVLAGGLTPENVADAVEAAAPFAVDVASGVEAESGQKDADAVSAFVDAAGGCQ</sequence>
<reference key="1">
    <citation type="journal article" date="2005" name="Genome Res.">
        <title>Living with two extremes: conclusions from the genome sequence of Natronomonas pharaonis.</title>
        <authorList>
            <person name="Falb M."/>
            <person name="Pfeiffer F."/>
            <person name="Palm P."/>
            <person name="Rodewald K."/>
            <person name="Hickmann V."/>
            <person name="Tittor J."/>
            <person name="Oesterhelt D."/>
        </authorList>
    </citation>
    <scope>NUCLEOTIDE SEQUENCE [LARGE SCALE GENOMIC DNA]</scope>
    <source>
        <strain>ATCC 35678 / DSM 2160 / CIP 103997 / JCM 8858 / NBRC 14720 / NCIMB 2260 / Gabara</strain>
    </source>
</reference>
<comment type="catalytic activity">
    <reaction evidence="1">
        <text>N-(5-phospho-beta-D-ribosyl)anthranilate = 1-(2-carboxyphenylamino)-1-deoxy-D-ribulose 5-phosphate</text>
        <dbReference type="Rhea" id="RHEA:21540"/>
        <dbReference type="ChEBI" id="CHEBI:18277"/>
        <dbReference type="ChEBI" id="CHEBI:58613"/>
        <dbReference type="EC" id="5.3.1.24"/>
    </reaction>
</comment>
<comment type="pathway">
    <text evidence="1">Amino-acid biosynthesis; L-tryptophan biosynthesis; L-tryptophan from chorismate: step 3/5.</text>
</comment>
<comment type="similarity">
    <text evidence="1">Belongs to the TrpF family.</text>
</comment>
<gene>
    <name evidence="1" type="primary">trpF</name>
    <name type="ordered locus">NP_3340A</name>
</gene>
<evidence type="ECO:0000255" key="1">
    <source>
        <dbReference type="HAMAP-Rule" id="MF_00135"/>
    </source>
</evidence>
<name>TRPF_NATPD</name>
<proteinExistence type="inferred from homology"/>
<accession>Q3IQ37</accession>
<keyword id="KW-0028">Amino-acid biosynthesis</keyword>
<keyword id="KW-0057">Aromatic amino acid biosynthesis</keyword>
<keyword id="KW-0413">Isomerase</keyword>
<keyword id="KW-1185">Reference proteome</keyword>
<keyword id="KW-0822">Tryptophan biosynthesis</keyword>
<feature type="chain" id="PRO_1000018612" description="N-(5'-phosphoribosyl)anthranilate isomerase">
    <location>
        <begin position="1"/>
        <end position="208"/>
    </location>
</feature>